<reference key="1">
    <citation type="journal article" date="1997" name="Genomics">
        <title>A novel SH3-containing human gene family preferentially expressed in the central nervous system.</title>
        <authorList>
            <person name="Giachino C."/>
            <person name="Lantelme E."/>
            <person name="Lanzetti L."/>
            <person name="Saccone S."/>
            <person name="Della Valle G."/>
            <person name="Migone N."/>
        </authorList>
    </citation>
    <scope>NUCLEOTIDE SEQUENCE [MRNA]</scope>
    <source>
        <tissue>Fetal brain</tissue>
    </source>
</reference>
<reference key="2">
    <citation type="submission" date="1998-03" db="EMBL/GenBank/DDBJ databases">
        <title>A family of EEN-like genes coding for SH3-domain containing proteins are preferentially expressed in human brain.</title>
        <authorList>
            <person name="So C.W."/>
            <person name="So C.K.C."/>
            <person name="Sham M.H."/>
            <person name="Chan L.C."/>
        </authorList>
    </citation>
    <scope>NUCLEOTIDE SEQUENCE [MRNA]</scope>
    <source>
        <tissue>Brain</tissue>
    </source>
</reference>
<reference key="3">
    <citation type="submission" date="2004-06" db="EMBL/GenBank/DDBJ databases">
        <title>Cloning of human full open reading frames in Gateway(TM) system entry vector (pDONR201).</title>
        <authorList>
            <person name="Halleck A."/>
            <person name="Ebert L."/>
            <person name="Mkoundinya M."/>
            <person name="Schick M."/>
            <person name="Eisenstein S."/>
            <person name="Neubert P."/>
            <person name="Kstrang K."/>
            <person name="Schatten R."/>
            <person name="Shen B."/>
            <person name="Henze S."/>
            <person name="Mar W."/>
            <person name="Korn B."/>
            <person name="Zuo D."/>
            <person name="Hu Y."/>
            <person name="LaBaer J."/>
        </authorList>
    </citation>
    <scope>NUCLEOTIDE SEQUENCE [LARGE SCALE MRNA]</scope>
</reference>
<reference key="4">
    <citation type="submission" date="2004-10" db="EMBL/GenBank/DDBJ databases">
        <title>Cloning of human full-length CDSs in BD Creator(TM) system donor vector.</title>
        <authorList>
            <person name="Kalnine N."/>
            <person name="Chen X."/>
            <person name="Rolfs A."/>
            <person name="Halleck A."/>
            <person name="Hines L."/>
            <person name="Eisenstein S."/>
            <person name="Koundinya M."/>
            <person name="Raphael J."/>
            <person name="Moreira D."/>
            <person name="Kelley T."/>
            <person name="LaBaer J."/>
            <person name="Lin Y."/>
            <person name="Phelan M."/>
            <person name="Farmer A."/>
        </authorList>
    </citation>
    <scope>NUCLEOTIDE SEQUENCE [LARGE SCALE MRNA]</scope>
</reference>
<reference key="5">
    <citation type="journal article" date="2004" name="Nat. Genet.">
        <title>Complete sequencing and characterization of 21,243 full-length human cDNAs.</title>
        <authorList>
            <person name="Ota T."/>
            <person name="Suzuki Y."/>
            <person name="Nishikawa T."/>
            <person name="Otsuki T."/>
            <person name="Sugiyama T."/>
            <person name="Irie R."/>
            <person name="Wakamatsu A."/>
            <person name="Hayashi K."/>
            <person name="Sato H."/>
            <person name="Nagai K."/>
            <person name="Kimura K."/>
            <person name="Makita H."/>
            <person name="Sekine M."/>
            <person name="Obayashi M."/>
            <person name="Nishi T."/>
            <person name="Shibahara T."/>
            <person name="Tanaka T."/>
            <person name="Ishii S."/>
            <person name="Yamamoto J."/>
            <person name="Saito K."/>
            <person name="Kawai Y."/>
            <person name="Isono Y."/>
            <person name="Nakamura Y."/>
            <person name="Nagahari K."/>
            <person name="Murakami K."/>
            <person name="Yasuda T."/>
            <person name="Iwayanagi T."/>
            <person name="Wagatsuma M."/>
            <person name="Shiratori A."/>
            <person name="Sudo H."/>
            <person name="Hosoiri T."/>
            <person name="Kaku Y."/>
            <person name="Kodaira H."/>
            <person name="Kondo H."/>
            <person name="Sugawara M."/>
            <person name="Takahashi M."/>
            <person name="Kanda K."/>
            <person name="Yokoi T."/>
            <person name="Furuya T."/>
            <person name="Kikkawa E."/>
            <person name="Omura Y."/>
            <person name="Abe K."/>
            <person name="Kamihara K."/>
            <person name="Katsuta N."/>
            <person name="Sato K."/>
            <person name="Tanikawa M."/>
            <person name="Yamazaki M."/>
            <person name="Ninomiya K."/>
            <person name="Ishibashi T."/>
            <person name="Yamashita H."/>
            <person name="Murakawa K."/>
            <person name="Fujimori K."/>
            <person name="Tanai H."/>
            <person name="Kimata M."/>
            <person name="Watanabe M."/>
            <person name="Hiraoka S."/>
            <person name="Chiba Y."/>
            <person name="Ishida S."/>
            <person name="Ono Y."/>
            <person name="Takiguchi S."/>
            <person name="Watanabe S."/>
            <person name="Yosida M."/>
            <person name="Hotuta T."/>
            <person name="Kusano J."/>
            <person name="Kanehori K."/>
            <person name="Takahashi-Fujii A."/>
            <person name="Hara H."/>
            <person name="Tanase T.-O."/>
            <person name="Nomura Y."/>
            <person name="Togiya S."/>
            <person name="Komai F."/>
            <person name="Hara R."/>
            <person name="Takeuchi K."/>
            <person name="Arita M."/>
            <person name="Imose N."/>
            <person name="Musashino K."/>
            <person name="Yuuki H."/>
            <person name="Oshima A."/>
            <person name="Sasaki N."/>
            <person name="Aotsuka S."/>
            <person name="Yoshikawa Y."/>
            <person name="Matsunawa H."/>
            <person name="Ichihara T."/>
            <person name="Shiohata N."/>
            <person name="Sano S."/>
            <person name="Moriya S."/>
            <person name="Momiyama H."/>
            <person name="Satoh N."/>
            <person name="Takami S."/>
            <person name="Terashima Y."/>
            <person name="Suzuki O."/>
            <person name="Nakagawa S."/>
            <person name="Senoh A."/>
            <person name="Mizoguchi H."/>
            <person name="Goto Y."/>
            <person name="Shimizu F."/>
            <person name="Wakebe H."/>
            <person name="Hishigaki H."/>
            <person name="Watanabe T."/>
            <person name="Sugiyama A."/>
            <person name="Takemoto M."/>
            <person name="Kawakami B."/>
            <person name="Yamazaki M."/>
            <person name="Watanabe K."/>
            <person name="Kumagai A."/>
            <person name="Itakura S."/>
            <person name="Fukuzumi Y."/>
            <person name="Fujimori Y."/>
            <person name="Komiyama M."/>
            <person name="Tashiro H."/>
            <person name="Tanigami A."/>
            <person name="Fujiwara T."/>
            <person name="Ono T."/>
            <person name="Yamada K."/>
            <person name="Fujii Y."/>
            <person name="Ozaki K."/>
            <person name="Hirao M."/>
            <person name="Ohmori Y."/>
            <person name="Kawabata A."/>
            <person name="Hikiji T."/>
            <person name="Kobatake N."/>
            <person name="Inagaki H."/>
            <person name="Ikema Y."/>
            <person name="Okamoto S."/>
            <person name="Okitani R."/>
            <person name="Kawakami T."/>
            <person name="Noguchi S."/>
            <person name="Itoh T."/>
            <person name="Shigeta K."/>
            <person name="Senba T."/>
            <person name="Matsumura K."/>
            <person name="Nakajima Y."/>
            <person name="Mizuno T."/>
            <person name="Morinaga M."/>
            <person name="Sasaki M."/>
            <person name="Togashi T."/>
            <person name="Oyama M."/>
            <person name="Hata H."/>
            <person name="Watanabe M."/>
            <person name="Komatsu T."/>
            <person name="Mizushima-Sugano J."/>
            <person name="Satoh T."/>
            <person name="Shirai Y."/>
            <person name="Takahashi Y."/>
            <person name="Nakagawa K."/>
            <person name="Okumura K."/>
            <person name="Nagase T."/>
            <person name="Nomura N."/>
            <person name="Kikuchi H."/>
            <person name="Masuho Y."/>
            <person name="Yamashita R."/>
            <person name="Nakai K."/>
            <person name="Yada T."/>
            <person name="Nakamura Y."/>
            <person name="Ohara O."/>
            <person name="Isogai T."/>
            <person name="Sugano S."/>
        </authorList>
    </citation>
    <scope>NUCLEOTIDE SEQUENCE [LARGE SCALE MRNA]</scope>
    <source>
        <tissue>Brain</tissue>
    </source>
</reference>
<reference key="6">
    <citation type="journal article" date="2004" name="Nature">
        <title>DNA sequence and analysis of human chromosome 9.</title>
        <authorList>
            <person name="Humphray S.J."/>
            <person name="Oliver K."/>
            <person name="Hunt A.R."/>
            <person name="Plumb R.W."/>
            <person name="Loveland J.E."/>
            <person name="Howe K.L."/>
            <person name="Andrews T.D."/>
            <person name="Searle S."/>
            <person name="Hunt S.E."/>
            <person name="Scott C.E."/>
            <person name="Jones M.C."/>
            <person name="Ainscough R."/>
            <person name="Almeida J.P."/>
            <person name="Ambrose K.D."/>
            <person name="Ashwell R.I.S."/>
            <person name="Babbage A.K."/>
            <person name="Babbage S."/>
            <person name="Bagguley C.L."/>
            <person name="Bailey J."/>
            <person name="Banerjee R."/>
            <person name="Barker D.J."/>
            <person name="Barlow K.F."/>
            <person name="Bates K."/>
            <person name="Beasley H."/>
            <person name="Beasley O."/>
            <person name="Bird C.P."/>
            <person name="Bray-Allen S."/>
            <person name="Brown A.J."/>
            <person name="Brown J.Y."/>
            <person name="Burford D."/>
            <person name="Burrill W."/>
            <person name="Burton J."/>
            <person name="Carder C."/>
            <person name="Carter N.P."/>
            <person name="Chapman J.C."/>
            <person name="Chen Y."/>
            <person name="Clarke G."/>
            <person name="Clark S.Y."/>
            <person name="Clee C.M."/>
            <person name="Clegg S."/>
            <person name="Collier R.E."/>
            <person name="Corby N."/>
            <person name="Crosier M."/>
            <person name="Cummings A.T."/>
            <person name="Davies J."/>
            <person name="Dhami P."/>
            <person name="Dunn M."/>
            <person name="Dutta I."/>
            <person name="Dyer L.W."/>
            <person name="Earthrowl M.E."/>
            <person name="Faulkner L."/>
            <person name="Fleming C.J."/>
            <person name="Frankish A."/>
            <person name="Frankland J.A."/>
            <person name="French L."/>
            <person name="Fricker D.G."/>
            <person name="Garner P."/>
            <person name="Garnett J."/>
            <person name="Ghori J."/>
            <person name="Gilbert J.G.R."/>
            <person name="Glison C."/>
            <person name="Grafham D.V."/>
            <person name="Gribble S."/>
            <person name="Griffiths C."/>
            <person name="Griffiths-Jones S."/>
            <person name="Grocock R."/>
            <person name="Guy J."/>
            <person name="Hall R.E."/>
            <person name="Hammond S."/>
            <person name="Harley J.L."/>
            <person name="Harrison E.S.I."/>
            <person name="Hart E.A."/>
            <person name="Heath P.D."/>
            <person name="Henderson C.D."/>
            <person name="Hopkins B.L."/>
            <person name="Howard P.J."/>
            <person name="Howden P.J."/>
            <person name="Huckle E."/>
            <person name="Johnson C."/>
            <person name="Johnson D."/>
            <person name="Joy A.A."/>
            <person name="Kay M."/>
            <person name="Keenan S."/>
            <person name="Kershaw J.K."/>
            <person name="Kimberley A.M."/>
            <person name="King A."/>
            <person name="Knights A."/>
            <person name="Laird G.K."/>
            <person name="Langford C."/>
            <person name="Lawlor S."/>
            <person name="Leongamornlert D.A."/>
            <person name="Leversha M."/>
            <person name="Lloyd C."/>
            <person name="Lloyd D.M."/>
            <person name="Lovell J."/>
            <person name="Martin S."/>
            <person name="Mashreghi-Mohammadi M."/>
            <person name="Matthews L."/>
            <person name="McLaren S."/>
            <person name="McLay K.E."/>
            <person name="McMurray A."/>
            <person name="Milne S."/>
            <person name="Nickerson T."/>
            <person name="Nisbett J."/>
            <person name="Nordsiek G."/>
            <person name="Pearce A.V."/>
            <person name="Peck A.I."/>
            <person name="Porter K.M."/>
            <person name="Pandian R."/>
            <person name="Pelan S."/>
            <person name="Phillimore B."/>
            <person name="Povey S."/>
            <person name="Ramsey Y."/>
            <person name="Rand V."/>
            <person name="Scharfe M."/>
            <person name="Sehra H.K."/>
            <person name="Shownkeen R."/>
            <person name="Sims S.K."/>
            <person name="Skuce C.D."/>
            <person name="Smith M."/>
            <person name="Steward C.A."/>
            <person name="Swarbreck D."/>
            <person name="Sycamore N."/>
            <person name="Tester J."/>
            <person name="Thorpe A."/>
            <person name="Tracey A."/>
            <person name="Tromans A."/>
            <person name="Thomas D.W."/>
            <person name="Wall M."/>
            <person name="Wallis J.M."/>
            <person name="West A.P."/>
            <person name="Whitehead S.L."/>
            <person name="Willey D.L."/>
            <person name="Williams S.A."/>
            <person name="Wilming L."/>
            <person name="Wray P.W."/>
            <person name="Young L."/>
            <person name="Ashurst J.L."/>
            <person name="Coulson A."/>
            <person name="Blocker H."/>
            <person name="Durbin R.M."/>
            <person name="Sulston J.E."/>
            <person name="Hubbard T."/>
            <person name="Jackson M.J."/>
            <person name="Bentley D.R."/>
            <person name="Beck S."/>
            <person name="Rogers J."/>
            <person name="Dunham I."/>
        </authorList>
    </citation>
    <scope>NUCLEOTIDE SEQUENCE [LARGE SCALE GENOMIC DNA]</scope>
</reference>
<reference key="7">
    <citation type="submission" date="2005-09" db="EMBL/GenBank/DDBJ databases">
        <authorList>
            <person name="Mural R.J."/>
            <person name="Istrail S."/>
            <person name="Sutton G.G."/>
            <person name="Florea L."/>
            <person name="Halpern A.L."/>
            <person name="Mobarry C.M."/>
            <person name="Lippert R."/>
            <person name="Walenz B."/>
            <person name="Shatkay H."/>
            <person name="Dew I."/>
            <person name="Miller J.R."/>
            <person name="Flanigan M.J."/>
            <person name="Edwards N.J."/>
            <person name="Bolanos R."/>
            <person name="Fasulo D."/>
            <person name="Halldorsson B.V."/>
            <person name="Hannenhalli S."/>
            <person name="Turner R."/>
            <person name="Yooseph S."/>
            <person name="Lu F."/>
            <person name="Nusskern D.R."/>
            <person name="Shue B.C."/>
            <person name="Zheng X.H."/>
            <person name="Zhong F."/>
            <person name="Delcher A.L."/>
            <person name="Huson D.H."/>
            <person name="Kravitz S.A."/>
            <person name="Mouchard L."/>
            <person name="Reinert K."/>
            <person name="Remington K.A."/>
            <person name="Clark A.G."/>
            <person name="Waterman M.S."/>
            <person name="Eichler E.E."/>
            <person name="Adams M.D."/>
            <person name="Hunkapiller M.W."/>
            <person name="Myers E.W."/>
            <person name="Venter J.C."/>
        </authorList>
    </citation>
    <scope>NUCLEOTIDE SEQUENCE [LARGE SCALE GENOMIC DNA]</scope>
</reference>
<reference key="8">
    <citation type="journal article" date="1999" name="J. Biol. Chem.">
        <title>Interaction of the metalloprotease disintegrins MDC9 and MDC15 with two SH3 domain-containing proteins, endophilin I and SH3PX1.</title>
        <authorList>
            <person name="Howard L."/>
            <person name="Nelson K.K."/>
            <person name="Maciewicz R.A."/>
            <person name="Blobel C.P."/>
        </authorList>
    </citation>
    <scope>INTERACTION WITH ADAM9 AND ADAM15</scope>
</reference>
<reference key="9">
    <citation type="journal article" date="1999" name="J. Biol. Chem.">
        <title>The SH3 domains of endophilin and amphiphysin bind to the proline-rich region of synaptojanin 1 at distinct sites that display an unconventional binding specificity.</title>
        <authorList>
            <person name="Cestra G."/>
            <person name="Castagnoli L."/>
            <person name="Dente L."/>
            <person name="Minenkova O."/>
            <person name="Petrelli A."/>
            <person name="Migone N."/>
            <person name="Hoffmueller U."/>
            <person name="Schneider-Mergener J."/>
            <person name="Cesareni G."/>
        </authorList>
    </citation>
    <scope>INTERACTION WITH SYNJ1</scope>
</reference>
<reference key="10">
    <citation type="journal article" date="2007" name="Cell">
        <title>Structural and biochemical studies of ALIX/AIP1 and its role in retrovirus budding.</title>
        <authorList>
            <person name="Fisher R.D."/>
            <person name="Chung H.Y."/>
            <person name="Zhai Q."/>
            <person name="Robinson H."/>
            <person name="Sundquist W.I."/>
            <person name="Hill C.P."/>
        </authorList>
    </citation>
    <scope>INTERACTION WITH PDCD6IP</scope>
</reference>
<reference key="11">
    <citation type="journal article" date="2008" name="Cell. Signal.">
        <title>Ataxin-2 associates with the endocytosis complex and affects EGF receptor trafficking.</title>
        <authorList>
            <person name="Nonis D."/>
            <person name="Schmidt M.H."/>
            <person name="van de Loo S."/>
            <person name="Eich F."/>
            <person name="Dikic I."/>
            <person name="Nowock J."/>
            <person name="Auburger G."/>
        </authorList>
    </citation>
    <scope>INTERACTION WITH ATXN2</scope>
</reference>
<reference key="12">
    <citation type="journal article" date="2012" name="PLoS ONE">
        <title>Bin2 is a membrane sculpting N-BAR protein that influences leucocyte podosomes, motility and phagocytosis.</title>
        <authorList>
            <person name="Sanchez-Barrena M.J."/>
            <person name="Vallis Y."/>
            <person name="Clatworthy M.R."/>
            <person name="Doherty G.J."/>
            <person name="Veprintsev D.B."/>
            <person name="Evans P.R."/>
            <person name="McMahon H.T."/>
        </authorList>
    </citation>
    <scope>INTERACTION WITH BIN2</scope>
</reference>
<reference key="13">
    <citation type="journal article" date="2006" name="EMBO J.">
        <title>Endophilin BAR domain drives membrane curvature by two newly identified structure-based mechanisms.</title>
        <authorList>
            <person name="Masuda M."/>
            <person name="Takeda S."/>
            <person name="Sone M."/>
            <person name="Ohki T."/>
            <person name="Mori H."/>
            <person name="Kamioka Y."/>
            <person name="Mochizuki N."/>
        </authorList>
    </citation>
    <scope>X-RAY CRYSTALLOGRAPHY (2.4 ANGSTROMS) OF 1-247</scope>
    <scope>DOMAIN</scope>
    <scope>MUTAGENESIS OF ALA-63; ALA-66; MET-70 AND PHE-202</scope>
</reference>
<reference key="14">
    <citation type="submission" date="2006-12" db="PDB data bank">
        <title>Solution structures of the SH3 domain of human SH3-containing GRB2-like protein 2.</title>
        <authorList>
            <consortium name="RIKEN structural genomics initiative (RSGI)"/>
        </authorList>
    </citation>
    <scope>STRUCTURE BY NMR OF 293-352</scope>
</reference>
<reference key="15">
    <citation type="journal article" date="2017" name="Hum. Mutat.">
        <title>A disease-associated mutation in the adhesion GPCR BAI2 (ADGRB2) increases receptor signaling activity.</title>
        <authorList>
            <person name="Purcell R.H."/>
            <person name="Toro C."/>
            <person name="Gahl W.A."/>
            <person name="Hall R.A."/>
        </authorList>
    </citation>
    <scope>INTERACTION WITH ADGRB2</scope>
</reference>
<proteinExistence type="evidence at protein level"/>
<feature type="chain" id="PRO_0000146747" description="Endophilin-A1">
    <location>
        <begin position="1"/>
        <end position="352"/>
    </location>
</feature>
<feature type="domain" description="BAR" evidence="8">
    <location>
        <begin position="18"/>
        <end position="249"/>
    </location>
</feature>
<feature type="domain" description="SH3" evidence="7">
    <location>
        <begin position="290"/>
        <end position="349"/>
    </location>
</feature>
<feature type="region of interest" description="Binds and tubulates liposomes" evidence="1">
    <location>
        <begin position="1"/>
        <end position="125"/>
    </location>
</feature>
<feature type="region of interest" description="Disordered" evidence="9">
    <location>
        <begin position="1"/>
        <end position="27"/>
    </location>
</feature>
<feature type="region of interest" description="Membrane-binding amphipathic helix" evidence="12">
    <location>
        <begin position="1"/>
        <end position="21"/>
    </location>
</feature>
<feature type="region of interest" description="Required for dimerization upon membrane association" evidence="1">
    <location>
        <begin position="60"/>
        <end position="87"/>
    </location>
</feature>
<feature type="region of interest" description="Disordered" evidence="9">
    <location>
        <begin position="245"/>
        <end position="289"/>
    </location>
</feature>
<feature type="coiled-coil region" evidence="6">
    <location>
        <begin position="181"/>
        <end position="248"/>
    </location>
</feature>
<feature type="compositionally biased region" description="Basic and acidic residues" evidence="9">
    <location>
        <begin position="245"/>
        <end position="257"/>
    </location>
</feature>
<feature type="compositionally biased region" description="Polar residues" evidence="9">
    <location>
        <begin position="268"/>
        <end position="283"/>
    </location>
</feature>
<feature type="modified residue" description="Phosphoserine" evidence="4">
    <location>
        <position position="262"/>
    </location>
</feature>
<feature type="modified residue" description="Phosphotyrosine" evidence="3">
    <location>
        <position position="299"/>
    </location>
</feature>
<feature type="mutagenesis site" description="Reduced tubulation of liposomes, 3-fold increase in tubule diameter, no effect on liposome binding; when associated with S-66 or with S-66 and Q-70." evidence="12">
    <original>A</original>
    <variation>S</variation>
    <location>
        <position position="63"/>
    </location>
</feature>
<feature type="mutagenesis site" description="Loss of tubulation of liposomes, no effect on liposome binding." evidence="12">
    <original>A</original>
    <variation>D</variation>
    <location>
        <position position="66"/>
    </location>
</feature>
<feature type="mutagenesis site" description="Reduced tubulation of liposomes, 3-fold increase in tubule diameter, no effect on liposome binding; when associated with S-63 or with S-63 and Q-70." evidence="12">
    <original>A</original>
    <variation>S</variation>
    <location>
        <position position="66"/>
    </location>
</feature>
<feature type="mutagenesis site" description="Vesiculation of liposomes, no effect on liposome binding, indol ring located in hydrophobic core of the membrane." evidence="12">
    <original>A</original>
    <variation>W</variation>
    <location>
        <position position="66"/>
    </location>
</feature>
<feature type="mutagenesis site" description="Reduced tubulation of liposomes, 3-fold increase in tubule diameter, no effect on liposome binding; when associated with S-63 and S-66." evidence="12">
    <original>M</original>
    <variation>Q</variation>
    <location>
        <position position="70"/>
    </location>
</feature>
<feature type="mutagenesis site" description="No effect. Indol ring not associated with the membrane." evidence="12">
    <original>F</original>
    <variation>W</variation>
    <location>
        <position position="202"/>
    </location>
</feature>
<feature type="helix" evidence="19">
    <location>
        <begin position="12"/>
        <end position="21"/>
    </location>
</feature>
<feature type="helix" evidence="19">
    <location>
        <begin position="24"/>
        <end position="58"/>
    </location>
</feature>
<feature type="helix" evidence="19">
    <location>
        <begin position="62"/>
        <end position="64"/>
    </location>
</feature>
<feature type="helix" evidence="18">
    <location>
        <begin position="65"/>
        <end position="68"/>
    </location>
</feature>
<feature type="helix" evidence="19">
    <location>
        <begin position="89"/>
        <end position="104"/>
    </location>
</feature>
<feature type="strand" evidence="19">
    <location>
        <begin position="106"/>
        <end position="109"/>
    </location>
</feature>
<feature type="helix" evidence="19">
    <location>
        <begin position="110"/>
        <end position="138"/>
    </location>
</feature>
<feature type="helix" evidence="19">
    <location>
        <begin position="140"/>
        <end position="148"/>
    </location>
</feature>
<feature type="helix" evidence="19">
    <location>
        <begin position="150"/>
        <end position="175"/>
    </location>
</feature>
<feature type="helix" evidence="19">
    <location>
        <begin position="180"/>
        <end position="246"/>
    </location>
</feature>
<feature type="strand" evidence="20">
    <location>
        <begin position="294"/>
        <end position="299"/>
    </location>
</feature>
<feature type="strand" evidence="20">
    <location>
        <begin position="316"/>
        <end position="318"/>
    </location>
</feature>
<feature type="strand" evidence="20">
    <location>
        <begin position="323"/>
        <end position="332"/>
    </location>
</feature>
<feature type="strand" evidence="20">
    <location>
        <begin position="335"/>
        <end position="348"/>
    </location>
</feature>
<comment type="function">
    <text evidence="4">Implicated in synaptic vesicle endocytosis. May recruit other proteins to membranes with high curvature. Required for BDNF-dependent dendrite outgrowth. Cooperates with SH3GL2 to mediate BDNF-NTRK2 early endocytic trafficking and signaling from early endosomes.</text>
</comment>
<comment type="subunit">
    <text evidence="4 5 10 11 13 14 15 16">Monomer; in cytoplasm. Homodimer; when associated with membranes (By similarity). Interacts with OPHN1 (By similarity). Interacts with SYNJ1 (PubMed:10542231). Interacts with DNM1 (By similarity). Interacts with MAP4K3; the interaction appears to regulate MAP4K3-mediated JNK activation (By similarity). Interacts with PDCD6IP (PubMed:17350572). Interacts with ATXN2 (PubMed:18602463). Interacts with ADAM9 and ADAM15 cytoplasmic tails (PubMed:10531379). Interacts with BIN2 (PubMed:23285027). Interacts with TMEM108 (By similarity). Interacts with ADGRB2 (PubMed:28891236).</text>
</comment>
<comment type="interaction">
    <interactant intactId="EBI-77938">
        <id>Q99962</id>
    </interactant>
    <interactant intactId="EBI-77818">
        <id>Q13444</id>
        <label>ADAM15</label>
    </interactant>
    <organismsDiffer>false</organismsDiffer>
    <experiments>2</experiments>
</comment>
<comment type="interaction">
    <interactant intactId="EBI-77938">
        <id>Q99962</id>
    </interactant>
    <interactant intactId="EBI-77903">
        <id>Q13443</id>
        <label>ADAM9</label>
    </interactant>
    <organismsDiffer>false</organismsDiffer>
    <experiments>2</experiments>
</comment>
<comment type="interaction">
    <interactant intactId="EBI-77938">
        <id>Q99962</id>
    </interactant>
    <interactant intactId="EBI-697691">
        <id>Q99700</id>
        <label>ATXN2</label>
    </interactant>
    <organismsDiffer>false</organismsDiffer>
    <experiments>9</experiments>
</comment>
<comment type="interaction">
    <interactant intactId="EBI-77938">
        <id>Q99962</id>
    </interactant>
    <interactant intactId="EBI-346547">
        <id>P50570</id>
        <label>DNM2</label>
    </interactant>
    <organismsDiffer>false</organismsDiffer>
    <experiments>2</experiments>
</comment>
<comment type="interaction">
    <interactant intactId="EBI-77938">
        <id>Q99962</id>
    </interactant>
    <interactant intactId="EBI-489887">
        <id>P50402</id>
        <label>EMD</label>
    </interactant>
    <organismsDiffer>false</organismsDiffer>
    <experiments>2</experiments>
</comment>
<comment type="interaction">
    <interactant intactId="EBI-77938">
        <id>Q99962</id>
    </interactant>
    <interactant intactId="EBI-5323863">
        <id>Q5S007</id>
        <label>LRRK2</label>
    </interactant>
    <organismsDiffer>false</organismsDiffer>
    <experiments>4</experiments>
</comment>
<comment type="interaction">
    <interactant intactId="EBI-77938">
        <id>Q99962</id>
    </interactant>
    <interactant intactId="EBI-724478">
        <id>Q9H3S7</id>
        <label>PTPN23</label>
    </interactant>
    <organismsDiffer>false</organismsDiffer>
    <experiments>2</experiments>
</comment>
<comment type="interaction">
    <interactant intactId="EBI-77938">
        <id>Q99962</id>
    </interactant>
    <interactant intactId="EBI-3940924">
        <id>Q70E73</id>
        <label>RAPH1</label>
    </interactant>
    <organismsDiffer>false</organismsDiffer>
    <experiments>5</experiments>
</comment>
<comment type="interaction">
    <interactant intactId="EBI-77938">
        <id>Q99962</id>
    </interactant>
    <interactant intactId="EBI-697911">
        <id>Q99961</id>
        <label>SH3GL1</label>
    </interactant>
    <organismsDiffer>false</organismsDiffer>
    <experiments>7</experiments>
</comment>
<comment type="interaction">
    <interactant intactId="EBI-77938">
        <id>Q99962</id>
    </interactant>
    <interactant intactId="EBI-77938">
        <id>Q99962</id>
        <label>SH3GL2</label>
    </interactant>
    <organismsDiffer>false</organismsDiffer>
    <experiments>4</experiments>
</comment>
<comment type="interaction">
    <interactant intactId="EBI-77938">
        <id>Q99962</id>
    </interactant>
    <interactant intactId="EBI-473910">
        <id>Q99963</id>
        <label>SH3GL3</label>
    </interactant>
    <organismsDiffer>false</organismsDiffer>
    <experiments>7</experiments>
</comment>
<comment type="interaction">
    <interactant intactId="EBI-77938">
        <id>Q99962</id>
    </interactant>
    <interactant intactId="EBI-346595">
        <id>Q96B97</id>
        <label>SH3KBP1</label>
    </interactant>
    <organismsDiffer>false</organismsDiffer>
    <experiments>2</experiments>
</comment>
<comment type="interaction">
    <interactant intactId="EBI-77938">
        <id>Q99962</id>
    </interactant>
    <interactant intactId="EBI-21014572">
        <id>Q6ICL3</id>
        <label>TANGO2</label>
    </interactant>
    <organismsDiffer>false</organismsDiffer>
    <experiments>2</experiments>
</comment>
<comment type="interaction">
    <interactant intactId="EBI-77938">
        <id>Q99962</id>
    </interactant>
    <interactant intactId="EBI-1149123">
        <id>Q62910</id>
        <label>Synj1</label>
    </interactant>
    <organismsDiffer>true</organismsDiffer>
    <experiments>2</experiments>
</comment>
<comment type="subcellular location">
    <subcellularLocation>
        <location evidence="2">Cytoplasm</location>
    </subcellularLocation>
    <subcellularLocation>
        <location evidence="2">Membrane</location>
        <topology evidence="2">Peripheral membrane protein</topology>
    </subcellularLocation>
    <subcellularLocation>
        <location evidence="4">Early endosome</location>
    </subcellularLocation>
    <subcellularLocation>
        <location evidence="2">Presynapse</location>
    </subcellularLocation>
</comment>
<comment type="tissue specificity">
    <text>Brain, mostly in frontal cortex. Expressed at high level in fetal cerebellum.</text>
</comment>
<comment type="domain">
    <text evidence="12">An N-terminal amphipathic helix, the BAR domain and a second amphipathic helix inserted into helix 1 of the BAR domain (N-BAR domain) induce membrane curvature and bind curved membranes. The BAR domain dimer forms a rigid crescent shaped bundle of helices with the pair of second amphipathic helices protruding towards the membrane-binding surface.</text>
</comment>
<comment type="miscellaneous">
    <text>HeLa cells expressing the N-BAR domain of SH3GL2 show tubulation of the plasma membrane. The N-BAR domain binds liposomes and induces formation of tubules from liposomes. The N-terminal amphipathic helix is required for liposome binding. The second amphipathic helix enhances liposome tubulation.</text>
</comment>
<comment type="similarity">
    <text evidence="17">Belongs to the endophilin family.</text>
</comment>
<comment type="online information" name="Atlas of Genetics and Cytogenetics in Oncology and Haematology">
    <link uri="https://atlasgeneticsoncology.org/gene/44345/SH3GL2"/>
</comment>
<gene>
    <name type="primary">SH3GL2</name>
    <name type="synonym">CNSA2</name>
    <name type="synonym">SH3D2A</name>
</gene>
<protein>
    <recommendedName>
        <fullName>Endophilin-A1</fullName>
    </recommendedName>
    <alternativeName>
        <fullName>EEN-B1</fullName>
    </alternativeName>
    <alternativeName>
        <fullName>Endophilin-1</fullName>
    </alternativeName>
    <alternativeName>
        <fullName>SH3 domain protein 2A</fullName>
    </alternativeName>
    <alternativeName>
        <fullName>SH3 domain-containing GRB2-like protein 2</fullName>
    </alternativeName>
</protein>
<sequence length="352" mass="39962">MSVAGLKKQFHKATQKVSEKVGGAEGTKLDDDFKEMERKVDVTSRAVMEIMTKTIEYLQPNPASRAKLSMINTMSKIRGQEKGPGYPQAEALLAEAMLKFGRELGDDCNFGPALGEVGEAMRELSEVKDSLDIEVKQNFIDPLQNLHDKDLREIQHHLKKLEGRRLDFDYKKKRQGKIPDEELRQALEKFDESKEIAESSMFNLLEMDIEQVSQLSALVQAQLEYHKQAVQILQQVTVRLEERIRQASSQPRREYQPKPRMSLEFPTGDSTQPNGGLSHTGTPKPSGVQMDQPCCRALYDFEPENEGELGFKEGDIITLTNQIDENWYEGMLHGHSGFFPINYVEILVALPH</sequence>
<accession>Q99962</accession>
<accession>B2R618</accession>
<accession>Q9NQK5</accession>
<keyword id="KW-0002">3D-structure</keyword>
<keyword id="KW-0966">Cell projection</keyword>
<keyword id="KW-0175">Coiled coil</keyword>
<keyword id="KW-0963">Cytoplasm</keyword>
<keyword id="KW-0254">Endocytosis</keyword>
<keyword id="KW-0967">Endosome</keyword>
<keyword id="KW-0446">Lipid-binding</keyword>
<keyword id="KW-0472">Membrane</keyword>
<keyword id="KW-0597">Phosphoprotein</keyword>
<keyword id="KW-1267">Proteomics identification</keyword>
<keyword id="KW-1185">Reference proteome</keyword>
<keyword id="KW-0728">SH3 domain</keyword>
<keyword id="KW-0770">Synapse</keyword>
<organism>
    <name type="scientific">Homo sapiens</name>
    <name type="common">Human</name>
    <dbReference type="NCBI Taxonomy" id="9606"/>
    <lineage>
        <taxon>Eukaryota</taxon>
        <taxon>Metazoa</taxon>
        <taxon>Chordata</taxon>
        <taxon>Craniata</taxon>
        <taxon>Vertebrata</taxon>
        <taxon>Euteleostomi</taxon>
        <taxon>Mammalia</taxon>
        <taxon>Eutheria</taxon>
        <taxon>Euarchontoglires</taxon>
        <taxon>Primates</taxon>
        <taxon>Haplorrhini</taxon>
        <taxon>Catarrhini</taxon>
        <taxon>Hominidae</taxon>
        <taxon>Homo</taxon>
    </lineage>
</organism>
<evidence type="ECO:0000250" key="1"/>
<evidence type="ECO:0000250" key="2">
    <source>
        <dbReference type="UniProtKB" id="O35179"/>
    </source>
</evidence>
<evidence type="ECO:0000250" key="3">
    <source>
        <dbReference type="UniProtKB" id="Q62419"/>
    </source>
</evidence>
<evidence type="ECO:0000250" key="4">
    <source>
        <dbReference type="UniProtKB" id="Q62420"/>
    </source>
</evidence>
<evidence type="ECO:0000250" key="5">
    <source>
        <dbReference type="UniProtKB" id="Q62910"/>
    </source>
</evidence>
<evidence type="ECO:0000255" key="6"/>
<evidence type="ECO:0000255" key="7">
    <source>
        <dbReference type="PROSITE-ProRule" id="PRU00192"/>
    </source>
</evidence>
<evidence type="ECO:0000255" key="8">
    <source>
        <dbReference type="PROSITE-ProRule" id="PRU00361"/>
    </source>
</evidence>
<evidence type="ECO:0000256" key="9">
    <source>
        <dbReference type="SAM" id="MobiDB-lite"/>
    </source>
</evidence>
<evidence type="ECO:0000269" key="10">
    <source>
    </source>
</evidence>
<evidence type="ECO:0000269" key="11">
    <source>
    </source>
</evidence>
<evidence type="ECO:0000269" key="12">
    <source>
    </source>
</evidence>
<evidence type="ECO:0000269" key="13">
    <source>
    </source>
</evidence>
<evidence type="ECO:0000269" key="14">
    <source>
    </source>
</evidence>
<evidence type="ECO:0000269" key="15">
    <source>
    </source>
</evidence>
<evidence type="ECO:0000269" key="16">
    <source>
    </source>
</evidence>
<evidence type="ECO:0000305" key="17"/>
<evidence type="ECO:0007829" key="18">
    <source>
        <dbReference type="PDB" id="1X03"/>
    </source>
</evidence>
<evidence type="ECO:0007829" key="19">
    <source>
        <dbReference type="PDB" id="2D4C"/>
    </source>
</evidence>
<evidence type="ECO:0007829" key="20">
    <source>
        <dbReference type="PDB" id="2DBM"/>
    </source>
</evidence>
<name>SH3G2_HUMAN</name>
<dbReference type="EMBL" id="X99657">
    <property type="protein sequence ID" value="CAA67971.1"/>
    <property type="molecule type" value="mRNA"/>
</dbReference>
<dbReference type="EMBL" id="AF036268">
    <property type="protein sequence ID" value="AAC04764.1"/>
    <property type="molecule type" value="mRNA"/>
</dbReference>
<dbReference type="EMBL" id="CR542086">
    <property type="protein sequence ID" value="CAG46883.1"/>
    <property type="molecule type" value="mRNA"/>
</dbReference>
<dbReference type="EMBL" id="CR542102">
    <property type="protein sequence ID" value="CAG46899.1"/>
    <property type="molecule type" value="mRNA"/>
</dbReference>
<dbReference type="EMBL" id="BT019682">
    <property type="protein sequence ID" value="AAV38488.1"/>
    <property type="molecule type" value="mRNA"/>
</dbReference>
<dbReference type="EMBL" id="AK312400">
    <property type="protein sequence ID" value="BAG35315.1"/>
    <property type="molecule type" value="mRNA"/>
</dbReference>
<dbReference type="EMBL" id="AL139115">
    <property type="status" value="NOT_ANNOTATED_CDS"/>
    <property type="molecule type" value="Genomic_DNA"/>
</dbReference>
<dbReference type="EMBL" id="AL133214">
    <property type="status" value="NOT_ANNOTATED_CDS"/>
    <property type="molecule type" value="Genomic_DNA"/>
</dbReference>
<dbReference type="EMBL" id="CH471071">
    <property type="protein sequence ID" value="EAW58661.1"/>
    <property type="molecule type" value="Genomic_DNA"/>
</dbReference>
<dbReference type="CCDS" id="CCDS6483.1"/>
<dbReference type="RefSeq" id="NP_003017.1">
    <property type="nucleotide sequence ID" value="NM_003026.5"/>
</dbReference>
<dbReference type="PDB" id="1X03">
    <property type="method" value="X-ray"/>
    <property type="resolution" value="3.10 A"/>
    <property type="chains" value="A=1-247"/>
</dbReference>
<dbReference type="PDB" id="1X04">
    <property type="method" value="X-ray"/>
    <property type="resolution" value="2.90 A"/>
    <property type="chains" value="A=1-58, A=89-247"/>
</dbReference>
<dbReference type="PDB" id="2D4C">
    <property type="method" value="X-ray"/>
    <property type="resolution" value="2.40 A"/>
    <property type="chains" value="A/B/C/D=1-247"/>
</dbReference>
<dbReference type="PDB" id="2DBM">
    <property type="method" value="NMR"/>
    <property type="chains" value="A=293-352"/>
</dbReference>
<dbReference type="PDBsum" id="1X03"/>
<dbReference type="PDBsum" id="1X04"/>
<dbReference type="PDBsum" id="2D4C"/>
<dbReference type="PDBsum" id="2DBM"/>
<dbReference type="BMRB" id="Q99962"/>
<dbReference type="SMR" id="Q99962"/>
<dbReference type="BioGRID" id="112353">
    <property type="interactions" value="75"/>
</dbReference>
<dbReference type="CORUM" id="Q99962"/>
<dbReference type="DIP" id="DIP-30996N"/>
<dbReference type="FunCoup" id="Q99962">
    <property type="interactions" value="1082"/>
</dbReference>
<dbReference type="IntAct" id="Q99962">
    <property type="interactions" value="75"/>
</dbReference>
<dbReference type="MINT" id="Q99962"/>
<dbReference type="STRING" id="9606.ENSP00000369981"/>
<dbReference type="iPTMnet" id="Q99962"/>
<dbReference type="PhosphoSitePlus" id="Q99962"/>
<dbReference type="BioMuta" id="SH3GL2"/>
<dbReference type="DMDM" id="10720276"/>
<dbReference type="jPOST" id="Q99962"/>
<dbReference type="MassIVE" id="Q99962"/>
<dbReference type="PaxDb" id="9606-ENSP00000369981"/>
<dbReference type="PeptideAtlas" id="Q99962"/>
<dbReference type="ProteomicsDB" id="78546"/>
<dbReference type="Pumba" id="Q99962"/>
<dbReference type="Antibodypedia" id="4106">
    <property type="antibodies" value="346 antibodies from 36 providers"/>
</dbReference>
<dbReference type="DNASU" id="6456"/>
<dbReference type="Ensembl" id="ENST00000380607.5">
    <property type="protein sequence ID" value="ENSP00000369981.4"/>
    <property type="gene ID" value="ENSG00000107295.10"/>
</dbReference>
<dbReference type="GeneID" id="6456"/>
<dbReference type="KEGG" id="hsa:6456"/>
<dbReference type="MANE-Select" id="ENST00000380607.5">
    <property type="protein sequence ID" value="ENSP00000369981.4"/>
    <property type="RefSeq nucleotide sequence ID" value="NM_003026.5"/>
    <property type="RefSeq protein sequence ID" value="NP_003017.1"/>
</dbReference>
<dbReference type="UCSC" id="uc003zna.4">
    <property type="organism name" value="human"/>
</dbReference>
<dbReference type="AGR" id="HGNC:10831"/>
<dbReference type="CTD" id="6456"/>
<dbReference type="DisGeNET" id="6456"/>
<dbReference type="GeneCards" id="SH3GL2"/>
<dbReference type="HGNC" id="HGNC:10831">
    <property type="gene designation" value="SH3GL2"/>
</dbReference>
<dbReference type="HPA" id="ENSG00000107295">
    <property type="expression patterns" value="Group enriched (brain, retina)"/>
</dbReference>
<dbReference type="MIM" id="604465">
    <property type="type" value="gene"/>
</dbReference>
<dbReference type="neXtProt" id="NX_Q99962"/>
<dbReference type="OpenTargets" id="ENSG00000107295"/>
<dbReference type="PharmGKB" id="PA35737"/>
<dbReference type="VEuPathDB" id="HostDB:ENSG00000107295"/>
<dbReference type="eggNOG" id="KOG1118">
    <property type="taxonomic scope" value="Eukaryota"/>
</dbReference>
<dbReference type="GeneTree" id="ENSGT00940000160529"/>
<dbReference type="HOGENOM" id="CLU_047887_0_0_1"/>
<dbReference type="InParanoid" id="Q99962"/>
<dbReference type="OMA" id="IQPRREY"/>
<dbReference type="OrthoDB" id="443981at2759"/>
<dbReference type="PAN-GO" id="Q99962">
    <property type="GO annotations" value="4 GO annotations based on evolutionary models"/>
</dbReference>
<dbReference type="PhylomeDB" id="Q99962"/>
<dbReference type="TreeFam" id="TF313281"/>
<dbReference type="PathwayCommons" id="Q99962"/>
<dbReference type="Reactome" id="R-HSA-177504">
    <property type="pathway name" value="Retrograde neurotrophin signalling"/>
</dbReference>
<dbReference type="Reactome" id="R-HSA-182971">
    <property type="pathway name" value="EGFR downregulation"/>
</dbReference>
<dbReference type="Reactome" id="R-HSA-2132295">
    <property type="pathway name" value="MHC class II antigen presentation"/>
</dbReference>
<dbReference type="Reactome" id="R-HSA-432720">
    <property type="pathway name" value="Lysosome Vesicle Biogenesis"/>
</dbReference>
<dbReference type="Reactome" id="R-HSA-432722">
    <property type="pathway name" value="Golgi Associated Vesicle Biogenesis"/>
</dbReference>
<dbReference type="Reactome" id="R-HSA-437239">
    <property type="pathway name" value="Recycling pathway of L1"/>
</dbReference>
<dbReference type="Reactome" id="R-HSA-6807004">
    <property type="pathway name" value="Negative regulation of MET activity"/>
</dbReference>
<dbReference type="Reactome" id="R-HSA-8856825">
    <property type="pathway name" value="Cargo recognition for clathrin-mediated endocytosis"/>
</dbReference>
<dbReference type="Reactome" id="R-HSA-8856828">
    <property type="pathway name" value="Clathrin-mediated endocytosis"/>
</dbReference>
<dbReference type="Reactome" id="R-HSA-8875360">
    <property type="pathway name" value="InlB-mediated entry of Listeria monocytogenes into host cell"/>
</dbReference>
<dbReference type="SignaLink" id="Q99962"/>
<dbReference type="SIGNOR" id="Q99962"/>
<dbReference type="BioGRID-ORCS" id="6456">
    <property type="hits" value="8 hits in 1141 CRISPR screens"/>
</dbReference>
<dbReference type="CD-CODE" id="91857CE7">
    <property type="entry name" value="Nucleolus"/>
</dbReference>
<dbReference type="CD-CODE" id="FB4E32DD">
    <property type="entry name" value="Presynaptic clusters and postsynaptic densities"/>
</dbReference>
<dbReference type="ChiTaRS" id="SH3GL2">
    <property type="organism name" value="human"/>
</dbReference>
<dbReference type="EvolutionaryTrace" id="Q99962"/>
<dbReference type="GeneWiki" id="SH3GL2"/>
<dbReference type="GenomeRNAi" id="6456"/>
<dbReference type="Pharos" id="Q99962">
    <property type="development level" value="Tbio"/>
</dbReference>
<dbReference type="PRO" id="PR:Q99962"/>
<dbReference type="Proteomes" id="UP000005640">
    <property type="component" value="Chromosome 9"/>
</dbReference>
<dbReference type="RNAct" id="Q99962">
    <property type="molecule type" value="protein"/>
</dbReference>
<dbReference type="Bgee" id="ENSG00000107295">
    <property type="expression patterns" value="Expressed in Brodmann (1909) area 23 and 134 other cell types or tissues"/>
</dbReference>
<dbReference type="GO" id="GO:0042995">
    <property type="term" value="C:cell projection"/>
    <property type="evidence" value="ECO:0007669"/>
    <property type="project" value="UniProtKB-KW"/>
</dbReference>
<dbReference type="GO" id="GO:0030669">
    <property type="term" value="C:clathrin-coated endocytic vesicle membrane"/>
    <property type="evidence" value="ECO:0000304"/>
    <property type="project" value="Reactome"/>
</dbReference>
<dbReference type="GO" id="GO:0005737">
    <property type="term" value="C:cytoplasm"/>
    <property type="evidence" value="ECO:0000318"/>
    <property type="project" value="GO_Central"/>
</dbReference>
<dbReference type="GO" id="GO:0005829">
    <property type="term" value="C:cytosol"/>
    <property type="evidence" value="ECO:0000304"/>
    <property type="project" value="Reactome"/>
</dbReference>
<dbReference type="GO" id="GO:0005769">
    <property type="term" value="C:early endosome"/>
    <property type="evidence" value="ECO:0000250"/>
    <property type="project" value="UniProtKB"/>
</dbReference>
<dbReference type="GO" id="GO:0098978">
    <property type="term" value="C:glutamatergic synapse"/>
    <property type="evidence" value="ECO:0000318"/>
    <property type="project" value="GO_Central"/>
</dbReference>
<dbReference type="GO" id="GO:0000139">
    <property type="term" value="C:Golgi membrane"/>
    <property type="evidence" value="ECO:0000304"/>
    <property type="project" value="Reactome"/>
</dbReference>
<dbReference type="GO" id="GO:0048471">
    <property type="term" value="C:perinuclear region of cytoplasm"/>
    <property type="evidence" value="ECO:0000315"/>
    <property type="project" value="ARUK-UCL"/>
</dbReference>
<dbReference type="GO" id="GO:0098684">
    <property type="term" value="C:photoreceptor ribbon synapse"/>
    <property type="evidence" value="ECO:0007669"/>
    <property type="project" value="Ensembl"/>
</dbReference>
<dbReference type="GO" id="GO:0005886">
    <property type="term" value="C:plasma membrane"/>
    <property type="evidence" value="ECO:0000304"/>
    <property type="project" value="Reactome"/>
</dbReference>
<dbReference type="GO" id="GO:0098794">
    <property type="term" value="C:postsynapse"/>
    <property type="evidence" value="ECO:0007669"/>
    <property type="project" value="Ensembl"/>
</dbReference>
<dbReference type="GO" id="GO:0098793">
    <property type="term" value="C:presynapse"/>
    <property type="evidence" value="ECO:0000318"/>
    <property type="project" value="GO_Central"/>
</dbReference>
<dbReference type="GO" id="GO:0099523">
    <property type="term" value="C:presynaptic cytosol"/>
    <property type="evidence" value="ECO:0007669"/>
    <property type="project" value="Ensembl"/>
</dbReference>
<dbReference type="GO" id="GO:0042802">
    <property type="term" value="F:identical protein binding"/>
    <property type="evidence" value="ECO:0000353"/>
    <property type="project" value="IntAct"/>
</dbReference>
<dbReference type="GO" id="GO:0008289">
    <property type="term" value="F:lipid binding"/>
    <property type="evidence" value="ECO:0007669"/>
    <property type="project" value="UniProtKB-KW"/>
</dbReference>
<dbReference type="GO" id="GO:1990416">
    <property type="term" value="P:cellular response to brain-derived neurotrophic factor stimulus"/>
    <property type="evidence" value="ECO:0000250"/>
    <property type="project" value="UniProtKB"/>
</dbReference>
<dbReference type="GO" id="GO:0007417">
    <property type="term" value="P:central nervous system development"/>
    <property type="evidence" value="ECO:0000304"/>
    <property type="project" value="ProtInc"/>
</dbReference>
<dbReference type="GO" id="GO:0097484">
    <property type="term" value="P:dendrite extension"/>
    <property type="evidence" value="ECO:0000250"/>
    <property type="project" value="UniProtKB"/>
</dbReference>
<dbReference type="GO" id="GO:1905604">
    <property type="term" value="P:negative regulation of blood-brain barrier permeability"/>
    <property type="evidence" value="ECO:0000315"/>
    <property type="project" value="ARUK-UCL"/>
</dbReference>
<dbReference type="GO" id="GO:0042059">
    <property type="term" value="P:negative regulation of epidermal growth factor receptor signaling pathway"/>
    <property type="evidence" value="ECO:0000314"/>
    <property type="project" value="ARUK-UCL"/>
</dbReference>
<dbReference type="GO" id="GO:0010629">
    <property type="term" value="P:negative regulation of gene expression"/>
    <property type="evidence" value="ECO:0000315"/>
    <property type="project" value="ARUK-UCL"/>
</dbReference>
<dbReference type="GO" id="GO:0043409">
    <property type="term" value="P:negative regulation of MAPK cascade"/>
    <property type="evidence" value="ECO:0000315"/>
    <property type="project" value="ARUK-UCL"/>
</dbReference>
<dbReference type="GO" id="GO:0031175">
    <property type="term" value="P:neuron projection development"/>
    <property type="evidence" value="ECO:0000250"/>
    <property type="project" value="UniProtKB"/>
</dbReference>
<dbReference type="GO" id="GO:0098974">
    <property type="term" value="P:postsynaptic actin cytoskeleton organization"/>
    <property type="evidence" value="ECO:0007669"/>
    <property type="project" value="Ensembl"/>
</dbReference>
<dbReference type="GO" id="GO:0002090">
    <property type="term" value="P:regulation of receptor internalization"/>
    <property type="evidence" value="ECO:0007669"/>
    <property type="project" value="Ensembl"/>
</dbReference>
<dbReference type="GO" id="GO:0007165">
    <property type="term" value="P:signal transduction"/>
    <property type="evidence" value="ECO:0000304"/>
    <property type="project" value="ProtInc"/>
</dbReference>
<dbReference type="GO" id="GO:0048488">
    <property type="term" value="P:synaptic vesicle endocytosis"/>
    <property type="evidence" value="ECO:0007669"/>
    <property type="project" value="Ensembl"/>
</dbReference>
<dbReference type="CDD" id="cd07613">
    <property type="entry name" value="BAR_Endophilin_A1"/>
    <property type="match status" value="1"/>
</dbReference>
<dbReference type="CDD" id="cd11803">
    <property type="entry name" value="SH3_Endophilin_A"/>
    <property type="match status" value="1"/>
</dbReference>
<dbReference type="FunFam" id="2.30.30.40:FF:000053">
    <property type="entry name" value="endophilin-A1 isoform X2"/>
    <property type="match status" value="1"/>
</dbReference>
<dbReference type="FunFam" id="1.20.1270.60:FF:000021">
    <property type="entry name" value="Endophilin-A2 isoform 1"/>
    <property type="match status" value="1"/>
</dbReference>
<dbReference type="Gene3D" id="1.20.1270.60">
    <property type="entry name" value="Arfaptin homology (AH) domain/BAR domain"/>
    <property type="match status" value="1"/>
</dbReference>
<dbReference type="Gene3D" id="2.30.30.40">
    <property type="entry name" value="SH3 Domains"/>
    <property type="match status" value="1"/>
</dbReference>
<dbReference type="InterPro" id="IPR027267">
    <property type="entry name" value="AH/BAR_dom_sf"/>
</dbReference>
<dbReference type="InterPro" id="IPR004148">
    <property type="entry name" value="BAR_dom"/>
</dbReference>
<dbReference type="InterPro" id="IPR035824">
    <property type="entry name" value="Endophilin_A_SH3"/>
</dbReference>
<dbReference type="InterPro" id="IPR050384">
    <property type="entry name" value="Endophilin_SH3RF"/>
</dbReference>
<dbReference type="InterPro" id="IPR036028">
    <property type="entry name" value="SH3-like_dom_sf"/>
</dbReference>
<dbReference type="InterPro" id="IPR001452">
    <property type="entry name" value="SH3_domain"/>
</dbReference>
<dbReference type="PANTHER" id="PTHR14167:SF50">
    <property type="entry name" value="ENDOPHILIN-A1"/>
    <property type="match status" value="1"/>
</dbReference>
<dbReference type="PANTHER" id="PTHR14167">
    <property type="entry name" value="SH3 DOMAIN-CONTAINING"/>
    <property type="match status" value="1"/>
</dbReference>
<dbReference type="Pfam" id="PF03114">
    <property type="entry name" value="BAR"/>
    <property type="match status" value="1"/>
</dbReference>
<dbReference type="Pfam" id="PF07653">
    <property type="entry name" value="SH3_2"/>
    <property type="match status" value="1"/>
</dbReference>
<dbReference type="PRINTS" id="PR00452">
    <property type="entry name" value="SH3DOMAIN"/>
</dbReference>
<dbReference type="PRINTS" id="PR01887">
    <property type="entry name" value="SPECTRNALPHA"/>
</dbReference>
<dbReference type="SMART" id="SM00721">
    <property type="entry name" value="BAR"/>
    <property type="match status" value="1"/>
</dbReference>
<dbReference type="SMART" id="SM00326">
    <property type="entry name" value="SH3"/>
    <property type="match status" value="1"/>
</dbReference>
<dbReference type="SUPFAM" id="SSF103657">
    <property type="entry name" value="BAR/IMD domain-like"/>
    <property type="match status" value="1"/>
</dbReference>
<dbReference type="SUPFAM" id="SSF50044">
    <property type="entry name" value="SH3-domain"/>
    <property type="match status" value="1"/>
</dbReference>
<dbReference type="PROSITE" id="PS51021">
    <property type="entry name" value="BAR"/>
    <property type="match status" value="1"/>
</dbReference>
<dbReference type="PROSITE" id="PS50002">
    <property type="entry name" value="SH3"/>
    <property type="match status" value="1"/>
</dbReference>